<dbReference type="EC" id="2.3.3.10" evidence="1"/>
<dbReference type="EMBL" id="CP000102">
    <property type="protein sequence ID" value="ABC56536.1"/>
    <property type="molecule type" value="Genomic_DNA"/>
</dbReference>
<dbReference type="RefSeq" id="WP_011405735.1">
    <property type="nucleotide sequence ID" value="NC_007681.1"/>
</dbReference>
<dbReference type="SMR" id="Q2NHU7"/>
<dbReference type="STRING" id="339860.Msp_0117"/>
<dbReference type="KEGG" id="mst:Msp_0117"/>
<dbReference type="eggNOG" id="arCOG01767">
    <property type="taxonomic scope" value="Archaea"/>
</dbReference>
<dbReference type="HOGENOM" id="CLU_039592_7_0_2"/>
<dbReference type="OrthoDB" id="5812at2157"/>
<dbReference type="UniPathway" id="UPA00058">
    <property type="reaction ID" value="UER00102"/>
</dbReference>
<dbReference type="Proteomes" id="UP000001931">
    <property type="component" value="Chromosome"/>
</dbReference>
<dbReference type="GO" id="GO:0003985">
    <property type="term" value="F:acetyl-CoA C-acetyltransferase activity"/>
    <property type="evidence" value="ECO:0007669"/>
    <property type="project" value="UniProtKB-UniRule"/>
</dbReference>
<dbReference type="GO" id="GO:0004421">
    <property type="term" value="F:hydroxymethylglutaryl-CoA synthase activity"/>
    <property type="evidence" value="ECO:0007669"/>
    <property type="project" value="InterPro"/>
</dbReference>
<dbReference type="GO" id="GO:0010142">
    <property type="term" value="P:farnesyl diphosphate biosynthetic process, mevalonate pathway"/>
    <property type="evidence" value="ECO:0007669"/>
    <property type="project" value="TreeGrafter"/>
</dbReference>
<dbReference type="GO" id="GO:0019287">
    <property type="term" value="P:isopentenyl diphosphate biosynthetic process, mevalonate pathway"/>
    <property type="evidence" value="ECO:0007669"/>
    <property type="project" value="UniProtKB-UniRule"/>
</dbReference>
<dbReference type="CDD" id="cd00827">
    <property type="entry name" value="init_cond_enzymes"/>
    <property type="match status" value="1"/>
</dbReference>
<dbReference type="FunFam" id="3.40.47.10:FF:000046">
    <property type="entry name" value="UPF0219 protein M1627_1703"/>
    <property type="match status" value="1"/>
</dbReference>
<dbReference type="Gene3D" id="3.40.47.10">
    <property type="match status" value="1"/>
</dbReference>
<dbReference type="HAMAP" id="MF_01409">
    <property type="entry name" value="HMG_CoA_synth_arch"/>
    <property type="match status" value="1"/>
</dbReference>
<dbReference type="InterPro" id="IPR013747">
    <property type="entry name" value="ACP_syn_III_C"/>
</dbReference>
<dbReference type="InterPro" id="IPR004656">
    <property type="entry name" value="HMG_CoA_Synthase"/>
</dbReference>
<dbReference type="InterPro" id="IPR016039">
    <property type="entry name" value="Thiolase-like"/>
</dbReference>
<dbReference type="NCBIfam" id="TIGR00748">
    <property type="entry name" value="HMG_CoA_syn_Arc"/>
    <property type="match status" value="1"/>
</dbReference>
<dbReference type="NCBIfam" id="NF003274">
    <property type="entry name" value="PRK04262.1"/>
    <property type="match status" value="1"/>
</dbReference>
<dbReference type="PANTHER" id="PTHR43323">
    <property type="entry name" value="3-HYDROXY-3-METHYLGLUTARYL COENZYME A SYNTHASE"/>
    <property type="match status" value="1"/>
</dbReference>
<dbReference type="PANTHER" id="PTHR43323:SF2">
    <property type="entry name" value="HYDROXYMETHYLGLUTARYL-COA SYNTHASE"/>
    <property type="match status" value="1"/>
</dbReference>
<dbReference type="Pfam" id="PF08541">
    <property type="entry name" value="ACP_syn_III_C"/>
    <property type="match status" value="1"/>
</dbReference>
<dbReference type="SUPFAM" id="SSF53901">
    <property type="entry name" value="Thiolase-like"/>
    <property type="match status" value="2"/>
</dbReference>
<keyword id="KW-0012">Acyltransferase</keyword>
<keyword id="KW-0414">Isoprene biosynthesis</keyword>
<keyword id="KW-1185">Reference proteome</keyword>
<keyword id="KW-0808">Transferase</keyword>
<name>HMGCS_METST</name>
<comment type="function">
    <text evidence="1">Catalyzes the condensation of acetyl-CoA with acetoacetyl-CoA to form 3-hydroxy-3-methylglutaryl-CoA (HMG-CoA). Functions in the mevalonate (MVA) pathway leading to isopentenyl diphosphate (IPP), a key precursor for the biosynthesis of isoprenoid compounds that are building blocks of archaeal membrane lipids.</text>
</comment>
<comment type="catalytic activity">
    <reaction evidence="1">
        <text>acetoacetyl-CoA + acetyl-CoA + H2O = (3S)-3-hydroxy-3-methylglutaryl-CoA + CoA + H(+)</text>
        <dbReference type="Rhea" id="RHEA:10188"/>
        <dbReference type="ChEBI" id="CHEBI:15377"/>
        <dbReference type="ChEBI" id="CHEBI:15378"/>
        <dbReference type="ChEBI" id="CHEBI:43074"/>
        <dbReference type="ChEBI" id="CHEBI:57286"/>
        <dbReference type="ChEBI" id="CHEBI:57287"/>
        <dbReference type="ChEBI" id="CHEBI:57288"/>
        <dbReference type="EC" id="2.3.3.10"/>
    </reaction>
    <physiologicalReaction direction="left-to-right" evidence="1">
        <dbReference type="Rhea" id="RHEA:10189"/>
    </physiologicalReaction>
</comment>
<comment type="pathway">
    <text evidence="1">Metabolic intermediate biosynthesis; (R)-mevalonate biosynthesis; (R)-mevalonate from acetyl-CoA: step 2/3.</text>
</comment>
<comment type="subunit">
    <text evidence="1">Interacts with acetoacetyl-CoA thiolase that catalyzes the precedent step in the pathway and with a DUF35 protein. The acetoacetyl-CoA thiolase/HMG-CoA synthase complex channels the intermediate via a fused CoA-binding site, which allows for efficient coupling of the endergonic thiolase reaction with the exergonic HMGCS reaction.</text>
</comment>
<comment type="similarity">
    <text evidence="1">Belongs to the thiolase-like superfamily. Archaeal HMG-CoA synthase family.</text>
</comment>
<reference key="1">
    <citation type="journal article" date="2006" name="J. Bacteriol.">
        <title>The genome sequence of Methanosphaera stadtmanae reveals why this human intestinal archaeon is restricted to methanol and H2 for methane formation and ATP synthesis.</title>
        <authorList>
            <person name="Fricke W.F."/>
            <person name="Seedorf H."/>
            <person name="Henne A."/>
            <person name="Kruer M."/>
            <person name="Liesegang H."/>
            <person name="Hedderich R."/>
            <person name="Gottschalk G."/>
            <person name="Thauer R.K."/>
        </authorList>
    </citation>
    <scope>NUCLEOTIDE SEQUENCE [LARGE SCALE GENOMIC DNA]</scope>
    <source>
        <strain>ATCC 43021 / DSM 3091 / JCM 11832 / MCB-3</strain>
    </source>
</reference>
<proteinExistence type="inferred from homology"/>
<gene>
    <name type="ordered locus">Msp_0117</name>
</gene>
<protein>
    <recommendedName>
        <fullName evidence="1">Hydroxymethylglutaryl-CoA synthase</fullName>
        <shortName evidence="1">HMG-CoA synthase</shortName>
        <shortName evidence="1">HMGCS</shortName>
        <ecNumber evidence="1">2.3.3.10</ecNumber>
    </recommendedName>
</protein>
<feature type="chain" id="PRO_1000068444" description="Hydroxymethylglutaryl-CoA synthase">
    <location>
        <begin position="1"/>
        <end position="346"/>
    </location>
</feature>
<feature type="active site" description="Proton donor/acceptor" evidence="1">
    <location>
        <position position="80"/>
    </location>
</feature>
<feature type="active site" description="Acyl-thioester intermediate" evidence="1">
    <location>
        <position position="112"/>
    </location>
</feature>
<feature type="active site" description="Proton donor/acceptor" evidence="1">
    <location>
        <position position="234"/>
    </location>
</feature>
<feature type="binding site" evidence="1">
    <location>
        <position position="28"/>
    </location>
    <ligand>
        <name>(3S)-3-hydroxy-3-methylglutaryl-CoA</name>
        <dbReference type="ChEBI" id="CHEBI:43074"/>
    </ligand>
</feature>
<feature type="binding site" evidence="1">
    <location>
        <position position="112"/>
    </location>
    <ligand>
        <name>(3S)-3-hydroxy-3-methylglutaryl-CoA</name>
        <dbReference type="ChEBI" id="CHEBI:43074"/>
    </ligand>
</feature>
<feature type="binding site" evidence="1">
    <location>
        <position position="153"/>
    </location>
    <ligand>
        <name>(3S)-3-hydroxy-3-methylglutaryl-CoA</name>
        <dbReference type="ChEBI" id="CHEBI:43074"/>
    </ligand>
</feature>
<feature type="binding site" evidence="1">
    <location>
        <position position="199"/>
    </location>
    <ligand>
        <name>CoA</name>
        <dbReference type="ChEBI" id="CHEBI:57287"/>
        <note>ligand shared with acetoacetyl-CoA thiolase</note>
    </ligand>
</feature>
<feature type="binding site" evidence="1">
    <location>
        <position position="201"/>
    </location>
    <ligand>
        <name>(3S)-3-hydroxy-3-methylglutaryl-CoA</name>
        <dbReference type="ChEBI" id="CHEBI:43074"/>
    </ligand>
</feature>
<feature type="binding site" evidence="1">
    <location>
        <position position="234"/>
    </location>
    <ligand>
        <name>(3S)-3-hydroxy-3-methylglutaryl-CoA</name>
        <dbReference type="ChEBI" id="CHEBI:43074"/>
    </ligand>
</feature>
<feature type="binding site" evidence="1">
    <location>
        <position position="239"/>
    </location>
    <ligand>
        <name>CoA</name>
        <dbReference type="ChEBI" id="CHEBI:57287"/>
        <note>ligand shared with acetoacetyl-CoA thiolase</note>
    </ligand>
</feature>
<feature type="binding site" evidence="1">
    <location>
        <position position="243"/>
    </location>
    <ligand>
        <name>(3S)-3-hydroxy-3-methylglutaryl-CoA</name>
        <dbReference type="ChEBI" id="CHEBI:43074"/>
    </ligand>
</feature>
<feature type="binding site" evidence="1">
    <location>
        <position position="266"/>
    </location>
    <ligand>
        <name>(3S)-3-hydroxy-3-methylglutaryl-CoA</name>
        <dbReference type="ChEBI" id="CHEBI:43074"/>
    </ligand>
</feature>
<feature type="binding site" evidence="1">
    <location>
        <position position="296"/>
    </location>
    <ligand>
        <name>(3S)-3-hydroxy-3-methylglutaryl-CoA</name>
        <dbReference type="ChEBI" id="CHEBI:43074"/>
    </ligand>
</feature>
<organism>
    <name type="scientific">Methanosphaera stadtmanae (strain ATCC 43021 / DSM 3091 / JCM 11832 / MCB-3)</name>
    <dbReference type="NCBI Taxonomy" id="339860"/>
    <lineage>
        <taxon>Archaea</taxon>
        <taxon>Methanobacteriati</taxon>
        <taxon>Methanobacteriota</taxon>
        <taxon>Methanomada group</taxon>
        <taxon>Methanobacteria</taxon>
        <taxon>Methanobacteriales</taxon>
        <taxon>Methanobacteriaceae</taxon>
        <taxon>Methanosphaera</taxon>
    </lineage>
</organism>
<accession>Q2NHU7</accession>
<evidence type="ECO:0000255" key="1">
    <source>
        <dbReference type="HAMAP-Rule" id="MF_01409"/>
    </source>
</evidence>
<sequence length="346" mass="36971">MTGIVGYGAHIPSYRIKVEEIAKVWGDDPKSISKGLVVNQKSVPGPDEDTITISVEAARRALQRAEIDPQDIGAIYVGSESHPYAVKPTATIVADAIRASPNLTAADLEFACKAGTAGIQAAVGLVKSGMIKYGLAIGADTSQGAPGDALEYTASAGGAAYIIGEDNTIADIEHTCSFTTDTPDFYRREGQAYPSHGGRFTGQPAYFKHVLGAANRMLEETGTTAKDYDYAVFHQPNGKFYIRVARKLGFTEDQYKQGLLTPNIGNTYSGATPLGLASILDIAKPGDKIFAVSYGSGAGSDAFKITVNDRIEEVRNNAKTLEEIQSKITYVDYATYAKFKGKIKMN</sequence>